<proteinExistence type="inferred from homology"/>
<name>PURL_PYRIL</name>
<accession>A1RQQ2</accession>
<feature type="chain" id="PRO_1000050339" description="Phosphoribosylformylglycinamidine synthase subunit PurL">
    <location>
        <begin position="1"/>
        <end position="693"/>
    </location>
</feature>
<feature type="active site" evidence="1">
    <location>
        <position position="34"/>
    </location>
</feature>
<feature type="active site" description="Proton acceptor" evidence="1">
    <location>
        <position position="80"/>
    </location>
</feature>
<feature type="binding site" evidence="1">
    <location>
        <position position="37"/>
    </location>
    <ligand>
        <name>ATP</name>
        <dbReference type="ChEBI" id="CHEBI:30616"/>
    </ligand>
</feature>
<feature type="binding site" evidence="1">
    <location>
        <position position="76"/>
    </location>
    <ligand>
        <name>ATP</name>
        <dbReference type="ChEBI" id="CHEBI:30616"/>
    </ligand>
</feature>
<feature type="binding site" evidence="1">
    <location>
        <position position="78"/>
    </location>
    <ligand>
        <name>Mg(2+)</name>
        <dbReference type="ChEBI" id="CHEBI:18420"/>
        <label>1</label>
    </ligand>
</feature>
<feature type="binding site" evidence="1">
    <location>
        <begin position="79"/>
        <end position="82"/>
    </location>
    <ligand>
        <name>substrate</name>
    </ligand>
</feature>
<feature type="binding site" evidence="1">
    <location>
        <position position="101"/>
    </location>
    <ligand>
        <name>substrate</name>
    </ligand>
</feature>
<feature type="binding site" evidence="1">
    <location>
        <position position="102"/>
    </location>
    <ligand>
        <name>Mg(2+)</name>
        <dbReference type="ChEBI" id="CHEBI:18420"/>
        <label>2</label>
    </ligand>
</feature>
<feature type="binding site" evidence="1">
    <location>
        <position position="222"/>
    </location>
    <ligand>
        <name>substrate</name>
    </ligand>
</feature>
<feature type="binding site" evidence="1">
    <location>
        <position position="248"/>
    </location>
    <ligand>
        <name>Mg(2+)</name>
        <dbReference type="ChEBI" id="CHEBI:18420"/>
        <label>2</label>
    </ligand>
</feature>
<feature type="binding site" evidence="1">
    <location>
        <begin position="292"/>
        <end position="294"/>
    </location>
    <ligand>
        <name>substrate</name>
    </ligand>
</feature>
<feature type="binding site" evidence="1">
    <location>
        <position position="470"/>
    </location>
    <ligand>
        <name>ATP</name>
        <dbReference type="ChEBI" id="CHEBI:30616"/>
    </ligand>
</feature>
<feature type="binding site" evidence="1">
    <location>
        <position position="507"/>
    </location>
    <ligand>
        <name>ATP</name>
        <dbReference type="ChEBI" id="CHEBI:30616"/>
    </ligand>
</feature>
<feature type="binding site" evidence="1">
    <location>
        <position position="510"/>
    </location>
    <ligand>
        <name>substrate</name>
    </ligand>
</feature>
<evidence type="ECO:0000255" key="1">
    <source>
        <dbReference type="HAMAP-Rule" id="MF_00420"/>
    </source>
</evidence>
<sequence length="693" mass="74726">MGLTQRELEIIRERLGREPTAAELAFFTSHWSEHCSYKSTKMWLRELPGSAPWVVRGRGTDAPLVEVAHGLYVSFKIESHNHPSAVDPYNGAATGVGGIIRDILTVGATPIALLVNLHFGPPEDPHAKWIFSNVIKGISDYGNRVGVPVVGGETWFDEDFTYTPIVLATCVGVVEAEAVPKGYVEPGDYIVVAGLGADRSGLGGSAFASKTLEGGEDLGAIQVADPLMGKKLIDVVKEVSRCVKFIKDLGGGGLATALAELSHWFSLGVEFHLDKLHVRDASALPEELLISETQERLIFVISPRDLPCLEEALRKYEVPYSIPGRFVKSDRVLVMWKGVKIVDIPISLADGAPEILWPQEPYQPSDIPEIPEPPIDKAIDIVLSSPNVAKKESIYMRFDFDVGVRTAVKPGEGDAAVLKLYQRGQLGLVVKGDANPRYTFLDPRLGAANAFVKAYRNVAVVGGVPLAAVDSINVGSPERPQVYWRFVQAVQGLKEAATELEVPIVGGKVSLYNEYMGRPIKPTVAVVVLGKIDDVSKANRALWHDGDKIYIWGVTKGEVGGSEYLKRVHGILAGRPPSIDYAAEKEIVAVIQSWLGKISGATDVGLGGLITALAKMAINSGIGGEIDVCKAPAETTRLDYLLFSESNGRFIATGAEGPGVAIGEAYGEEFVVKCGGTLIYKRGVEELKRLMSL</sequence>
<reference key="1">
    <citation type="submission" date="2006-12" db="EMBL/GenBank/DDBJ databases">
        <title>Complete sequence of Pyrobaculum islandicum DSM 4184.</title>
        <authorList>
            <person name="Copeland A."/>
            <person name="Lucas S."/>
            <person name="Lapidus A."/>
            <person name="Barry K."/>
            <person name="Detter J.C."/>
            <person name="Glavina del Rio T."/>
            <person name="Dalin E."/>
            <person name="Tice H."/>
            <person name="Pitluck S."/>
            <person name="Meincke L."/>
            <person name="Brettin T."/>
            <person name="Bruce D."/>
            <person name="Han C."/>
            <person name="Tapia R."/>
            <person name="Gilna P."/>
            <person name="Schmutz J."/>
            <person name="Larimer F."/>
            <person name="Land M."/>
            <person name="Hauser L."/>
            <person name="Kyrpides N."/>
            <person name="Mikhailova N."/>
            <person name="Cozen A.E."/>
            <person name="Fitz-Gibbon S.T."/>
            <person name="House C.H."/>
            <person name="Saltikov C."/>
            <person name="Lowe T."/>
            <person name="Richardson P."/>
        </authorList>
    </citation>
    <scope>NUCLEOTIDE SEQUENCE [LARGE SCALE GENOMIC DNA]</scope>
    <source>
        <strain>DSM 4184 / JCM 9189 / GEO3</strain>
    </source>
</reference>
<dbReference type="EC" id="6.3.5.3" evidence="1"/>
<dbReference type="EMBL" id="CP000504">
    <property type="protein sequence ID" value="ABL87284.1"/>
    <property type="molecule type" value="Genomic_DNA"/>
</dbReference>
<dbReference type="RefSeq" id="WP_011761861.1">
    <property type="nucleotide sequence ID" value="NC_008701.1"/>
</dbReference>
<dbReference type="SMR" id="A1RQQ2"/>
<dbReference type="STRING" id="384616.Pisl_0101"/>
<dbReference type="GeneID" id="4616954"/>
<dbReference type="KEGG" id="pis:Pisl_0101"/>
<dbReference type="eggNOG" id="arCOG00641">
    <property type="taxonomic scope" value="Archaea"/>
</dbReference>
<dbReference type="HOGENOM" id="CLU_003100_0_1_2"/>
<dbReference type="OrthoDB" id="8251at2157"/>
<dbReference type="UniPathway" id="UPA00074">
    <property type="reaction ID" value="UER00128"/>
</dbReference>
<dbReference type="Proteomes" id="UP000002595">
    <property type="component" value="Chromosome"/>
</dbReference>
<dbReference type="GO" id="GO:0005737">
    <property type="term" value="C:cytoplasm"/>
    <property type="evidence" value="ECO:0007669"/>
    <property type="project" value="UniProtKB-SubCell"/>
</dbReference>
<dbReference type="GO" id="GO:0005524">
    <property type="term" value="F:ATP binding"/>
    <property type="evidence" value="ECO:0007669"/>
    <property type="project" value="UniProtKB-UniRule"/>
</dbReference>
<dbReference type="GO" id="GO:0000287">
    <property type="term" value="F:magnesium ion binding"/>
    <property type="evidence" value="ECO:0007669"/>
    <property type="project" value="UniProtKB-UniRule"/>
</dbReference>
<dbReference type="GO" id="GO:0004642">
    <property type="term" value="F:phosphoribosylformylglycinamidine synthase activity"/>
    <property type="evidence" value="ECO:0007669"/>
    <property type="project" value="UniProtKB-UniRule"/>
</dbReference>
<dbReference type="GO" id="GO:0006189">
    <property type="term" value="P:'de novo' IMP biosynthetic process"/>
    <property type="evidence" value="ECO:0007669"/>
    <property type="project" value="UniProtKB-UniRule"/>
</dbReference>
<dbReference type="CDD" id="cd02203">
    <property type="entry name" value="PurL_repeat1"/>
    <property type="match status" value="1"/>
</dbReference>
<dbReference type="CDD" id="cd02204">
    <property type="entry name" value="PurL_repeat2"/>
    <property type="match status" value="1"/>
</dbReference>
<dbReference type="Gene3D" id="3.90.650.10">
    <property type="entry name" value="PurM-like C-terminal domain"/>
    <property type="match status" value="2"/>
</dbReference>
<dbReference type="Gene3D" id="3.30.1330.10">
    <property type="entry name" value="PurM-like, N-terminal domain"/>
    <property type="match status" value="2"/>
</dbReference>
<dbReference type="HAMAP" id="MF_00420">
    <property type="entry name" value="PurL_2"/>
    <property type="match status" value="1"/>
</dbReference>
<dbReference type="InterPro" id="IPR010074">
    <property type="entry name" value="PRibForGlyAmidine_synth_PurL"/>
</dbReference>
<dbReference type="InterPro" id="IPR041609">
    <property type="entry name" value="PurL_linker"/>
</dbReference>
<dbReference type="InterPro" id="IPR010918">
    <property type="entry name" value="PurM-like_C_dom"/>
</dbReference>
<dbReference type="InterPro" id="IPR036676">
    <property type="entry name" value="PurM-like_C_sf"/>
</dbReference>
<dbReference type="InterPro" id="IPR016188">
    <property type="entry name" value="PurM-like_N"/>
</dbReference>
<dbReference type="InterPro" id="IPR036921">
    <property type="entry name" value="PurM-like_N_sf"/>
</dbReference>
<dbReference type="NCBIfam" id="TIGR01736">
    <property type="entry name" value="FGAM_synth_II"/>
    <property type="match status" value="1"/>
</dbReference>
<dbReference type="NCBIfam" id="NF002290">
    <property type="entry name" value="PRK01213.1"/>
    <property type="match status" value="1"/>
</dbReference>
<dbReference type="PANTHER" id="PTHR43555">
    <property type="entry name" value="PHOSPHORIBOSYLFORMYLGLYCINAMIDINE SYNTHASE SUBUNIT PURL"/>
    <property type="match status" value="1"/>
</dbReference>
<dbReference type="PANTHER" id="PTHR43555:SF1">
    <property type="entry name" value="PHOSPHORIBOSYLFORMYLGLYCINAMIDINE SYNTHASE SUBUNIT PURL"/>
    <property type="match status" value="1"/>
</dbReference>
<dbReference type="Pfam" id="PF00586">
    <property type="entry name" value="AIRS"/>
    <property type="match status" value="2"/>
</dbReference>
<dbReference type="Pfam" id="PF02769">
    <property type="entry name" value="AIRS_C"/>
    <property type="match status" value="2"/>
</dbReference>
<dbReference type="Pfam" id="PF18072">
    <property type="entry name" value="FGAR-AT_linker"/>
    <property type="match status" value="1"/>
</dbReference>
<dbReference type="PIRSF" id="PIRSF001587">
    <property type="entry name" value="FGAM_synthase_II"/>
    <property type="match status" value="1"/>
</dbReference>
<dbReference type="SUPFAM" id="SSF56042">
    <property type="entry name" value="PurM C-terminal domain-like"/>
    <property type="match status" value="2"/>
</dbReference>
<dbReference type="SUPFAM" id="SSF55326">
    <property type="entry name" value="PurM N-terminal domain-like"/>
    <property type="match status" value="2"/>
</dbReference>
<gene>
    <name evidence="1" type="primary">purL</name>
    <name type="ordered locus">Pisl_0101</name>
</gene>
<comment type="function">
    <text evidence="1">Part of the phosphoribosylformylglycinamidine synthase complex involved in the purines biosynthetic pathway. Catalyzes the ATP-dependent conversion of formylglycinamide ribonucleotide (FGAR) and glutamine to yield formylglycinamidine ribonucleotide (FGAM) and glutamate. The FGAM synthase complex is composed of three subunits. PurQ produces an ammonia molecule by converting glutamine to glutamate. PurL transfers the ammonia molecule to FGAR to form FGAM in an ATP-dependent manner. PurS interacts with PurQ and PurL and is thought to assist in the transfer of the ammonia molecule from PurQ to PurL.</text>
</comment>
<comment type="catalytic activity">
    <reaction evidence="1">
        <text>N(2)-formyl-N(1)-(5-phospho-beta-D-ribosyl)glycinamide + L-glutamine + ATP + H2O = 2-formamido-N(1)-(5-O-phospho-beta-D-ribosyl)acetamidine + L-glutamate + ADP + phosphate + H(+)</text>
        <dbReference type="Rhea" id="RHEA:17129"/>
        <dbReference type="ChEBI" id="CHEBI:15377"/>
        <dbReference type="ChEBI" id="CHEBI:15378"/>
        <dbReference type="ChEBI" id="CHEBI:29985"/>
        <dbReference type="ChEBI" id="CHEBI:30616"/>
        <dbReference type="ChEBI" id="CHEBI:43474"/>
        <dbReference type="ChEBI" id="CHEBI:58359"/>
        <dbReference type="ChEBI" id="CHEBI:147286"/>
        <dbReference type="ChEBI" id="CHEBI:147287"/>
        <dbReference type="ChEBI" id="CHEBI:456216"/>
        <dbReference type="EC" id="6.3.5.3"/>
    </reaction>
</comment>
<comment type="pathway">
    <text evidence="1">Purine metabolism; IMP biosynthesis via de novo pathway; 5-amino-1-(5-phospho-D-ribosyl)imidazole from N(2)-formyl-N(1)-(5-phospho-D-ribosyl)glycinamide: step 1/2.</text>
</comment>
<comment type="subunit">
    <text evidence="1">Monomer. Part of the FGAM synthase complex composed of 1 PurL, 1 PurQ and 2 PurS subunits.</text>
</comment>
<comment type="subcellular location">
    <subcellularLocation>
        <location evidence="1">Cytoplasm</location>
    </subcellularLocation>
</comment>
<comment type="similarity">
    <text evidence="1">Belongs to the FGAMS family.</text>
</comment>
<protein>
    <recommendedName>
        <fullName evidence="1">Phosphoribosylformylglycinamidine synthase subunit PurL</fullName>
        <shortName evidence="1">FGAM synthase</shortName>
        <ecNumber evidence="1">6.3.5.3</ecNumber>
    </recommendedName>
    <alternativeName>
        <fullName evidence="1">Formylglycinamide ribonucleotide amidotransferase subunit II</fullName>
        <shortName evidence="1">FGAR amidotransferase II</shortName>
        <shortName evidence="1">FGAR-AT II</shortName>
    </alternativeName>
    <alternativeName>
        <fullName evidence="1">Glutamine amidotransferase PurL</fullName>
    </alternativeName>
    <alternativeName>
        <fullName evidence="1">Phosphoribosylformylglycinamidine synthase subunit II</fullName>
    </alternativeName>
</protein>
<keyword id="KW-0067">ATP-binding</keyword>
<keyword id="KW-0963">Cytoplasm</keyword>
<keyword id="KW-0436">Ligase</keyword>
<keyword id="KW-0460">Magnesium</keyword>
<keyword id="KW-0479">Metal-binding</keyword>
<keyword id="KW-0547">Nucleotide-binding</keyword>
<keyword id="KW-0658">Purine biosynthesis</keyword>
<organism>
    <name type="scientific">Pyrobaculum islandicum (strain DSM 4184 / JCM 9189 / GEO3)</name>
    <dbReference type="NCBI Taxonomy" id="384616"/>
    <lineage>
        <taxon>Archaea</taxon>
        <taxon>Thermoproteota</taxon>
        <taxon>Thermoprotei</taxon>
        <taxon>Thermoproteales</taxon>
        <taxon>Thermoproteaceae</taxon>
        <taxon>Pyrobaculum</taxon>
    </lineage>
</organism>